<reference key="1">
    <citation type="journal article" date="2009" name="PLoS Genet.">
        <title>Organised genome dynamics in the Escherichia coli species results in highly diverse adaptive paths.</title>
        <authorList>
            <person name="Touchon M."/>
            <person name="Hoede C."/>
            <person name="Tenaillon O."/>
            <person name="Barbe V."/>
            <person name="Baeriswyl S."/>
            <person name="Bidet P."/>
            <person name="Bingen E."/>
            <person name="Bonacorsi S."/>
            <person name="Bouchier C."/>
            <person name="Bouvet O."/>
            <person name="Calteau A."/>
            <person name="Chiapello H."/>
            <person name="Clermont O."/>
            <person name="Cruveiller S."/>
            <person name="Danchin A."/>
            <person name="Diard M."/>
            <person name="Dossat C."/>
            <person name="Karoui M.E."/>
            <person name="Frapy E."/>
            <person name="Garry L."/>
            <person name="Ghigo J.M."/>
            <person name="Gilles A.M."/>
            <person name="Johnson J."/>
            <person name="Le Bouguenec C."/>
            <person name="Lescat M."/>
            <person name="Mangenot S."/>
            <person name="Martinez-Jehanne V."/>
            <person name="Matic I."/>
            <person name="Nassif X."/>
            <person name="Oztas S."/>
            <person name="Petit M.A."/>
            <person name="Pichon C."/>
            <person name="Rouy Z."/>
            <person name="Ruf C.S."/>
            <person name="Schneider D."/>
            <person name="Tourret J."/>
            <person name="Vacherie B."/>
            <person name="Vallenet D."/>
            <person name="Medigue C."/>
            <person name="Rocha E.P.C."/>
            <person name="Denamur E."/>
        </authorList>
    </citation>
    <scope>NUCLEOTIDE SEQUENCE [LARGE SCALE GENOMIC DNA]</scope>
    <source>
        <strain>UMN026 / ExPEC</strain>
    </source>
</reference>
<accession>B7N5G7</accession>
<sequence>MKLSRRSFMKANAVAAAAAAAGLSVPGVARAVVGQQEAIKWDKAPCRFCGTGCGVLVGTQQGRVVACQGDPDAPVNRGLNCIKGYFLPKIMYGKDRLTQPLLRMKNGKYDKEGEFTPITWDQAFDVMEEKFKTALKEKGPESIGMFGSGQWTIWEGYAASKLFKAGFRSNNIDPNARHCMASAVVGFMRTFGMDEPMGCYDDIEQADAFVLWGANMAEMHPILWSRITNRRLSNQNVTVAVLSTYQHRSFELADNGIIFTPQSDLVILNYIANYIIQNNAINQDFFSKHVNLRKGATDIGYGLRPTHPLEKAAKNPGSDASEPMSFEDYKAFVAEYTLEKTAEMTGVPKDQLEQLAQLYADPNKKVISYWTMGFNQHTRGVWANNLVYNLHLLTGKISQPGCGPFSLTGQPSACGTAREVGTFAHRLPADMVVTNEKHRDICEKKWNIPSGTIPAKIGLHAVAQDRALKDGKLNVYWTMCTNNMQAGPNINEERMPGWRDPRNFIIVSDPYPTVSALAADLILPTAMWVEKEGAYGNAERRTQFWRQQVQAPGEAKSDLWQLVQFSRRFKTEEVWPEELLAKKPELRGKTLYEVLYATPEVSKFPVSELAEDQLNDESRELGFYLQKGLFEEYAWFGRGHGHDLAPFDDYHKARGLRWPVVNGKETQWRYSEGNDPYVKAGEGYKFYGKPDGKAVIFALPFEPAAEAPDEEYDLWLSTGRVLEHWHTGSMTRRVPELHRAFPEAVLFIHPLDAKARDLRRGDKVKVVSRRGEVISIVETRGRNRPPQGLVYMPFFDAAQLVNKLTLDATDPLSKETDFKKCAVKLEKV</sequence>
<proteinExistence type="inferred from homology"/>
<protein>
    <recommendedName>
        <fullName evidence="1">Periplasmic nitrate reductase</fullName>
        <ecNumber evidence="1">1.9.6.1</ecNumber>
    </recommendedName>
</protein>
<organism>
    <name type="scientific">Escherichia coli O17:K52:H18 (strain UMN026 / ExPEC)</name>
    <dbReference type="NCBI Taxonomy" id="585056"/>
    <lineage>
        <taxon>Bacteria</taxon>
        <taxon>Pseudomonadati</taxon>
        <taxon>Pseudomonadota</taxon>
        <taxon>Gammaproteobacteria</taxon>
        <taxon>Enterobacterales</taxon>
        <taxon>Enterobacteriaceae</taxon>
        <taxon>Escherichia</taxon>
    </lineage>
</organism>
<evidence type="ECO:0000255" key="1">
    <source>
        <dbReference type="HAMAP-Rule" id="MF_01630"/>
    </source>
</evidence>
<name>NAPA_ECOLU</name>
<feature type="signal peptide" description="Tat-type signal" evidence="1">
    <location>
        <begin position="1"/>
        <end position="31"/>
    </location>
</feature>
<feature type="chain" id="PRO_1000186361" description="Periplasmic nitrate reductase" evidence="1">
    <location>
        <begin position="32"/>
        <end position="828"/>
    </location>
</feature>
<feature type="domain" description="4Fe-4S Mo/W bis-MGD-type" evidence="1">
    <location>
        <begin position="39"/>
        <end position="95"/>
    </location>
</feature>
<feature type="binding site" evidence="1">
    <location>
        <position position="46"/>
    </location>
    <ligand>
        <name>[4Fe-4S] cluster</name>
        <dbReference type="ChEBI" id="CHEBI:49883"/>
    </ligand>
</feature>
<feature type="binding site" evidence="1">
    <location>
        <position position="49"/>
    </location>
    <ligand>
        <name>[4Fe-4S] cluster</name>
        <dbReference type="ChEBI" id="CHEBI:49883"/>
    </ligand>
</feature>
<feature type="binding site" evidence="1">
    <location>
        <position position="53"/>
    </location>
    <ligand>
        <name>[4Fe-4S] cluster</name>
        <dbReference type="ChEBI" id="CHEBI:49883"/>
    </ligand>
</feature>
<feature type="binding site" evidence="1">
    <location>
        <position position="81"/>
    </location>
    <ligand>
        <name>[4Fe-4S] cluster</name>
        <dbReference type="ChEBI" id="CHEBI:49883"/>
    </ligand>
</feature>
<feature type="binding site" evidence="1">
    <location>
        <position position="83"/>
    </location>
    <ligand>
        <name>Mo-bis(molybdopterin guanine dinucleotide)</name>
        <dbReference type="ChEBI" id="CHEBI:60539"/>
    </ligand>
</feature>
<feature type="binding site" evidence="1">
    <location>
        <position position="150"/>
    </location>
    <ligand>
        <name>Mo-bis(molybdopterin guanine dinucleotide)</name>
        <dbReference type="ChEBI" id="CHEBI:60539"/>
    </ligand>
</feature>
<feature type="binding site" evidence="1">
    <location>
        <position position="175"/>
    </location>
    <ligand>
        <name>Mo-bis(molybdopterin guanine dinucleotide)</name>
        <dbReference type="ChEBI" id="CHEBI:60539"/>
    </ligand>
</feature>
<feature type="binding site" evidence="1">
    <location>
        <position position="179"/>
    </location>
    <ligand>
        <name>Mo-bis(molybdopterin guanine dinucleotide)</name>
        <dbReference type="ChEBI" id="CHEBI:60539"/>
    </ligand>
</feature>
<feature type="binding site" evidence="1">
    <location>
        <begin position="212"/>
        <end position="219"/>
    </location>
    <ligand>
        <name>Mo-bis(molybdopterin guanine dinucleotide)</name>
        <dbReference type="ChEBI" id="CHEBI:60539"/>
    </ligand>
</feature>
<feature type="binding site" evidence="1">
    <location>
        <begin position="243"/>
        <end position="247"/>
    </location>
    <ligand>
        <name>Mo-bis(molybdopterin guanine dinucleotide)</name>
        <dbReference type="ChEBI" id="CHEBI:60539"/>
    </ligand>
</feature>
<feature type="binding site" evidence="1">
    <location>
        <begin position="262"/>
        <end position="264"/>
    </location>
    <ligand>
        <name>Mo-bis(molybdopterin guanine dinucleotide)</name>
        <dbReference type="ChEBI" id="CHEBI:60539"/>
    </ligand>
</feature>
<feature type="binding site" evidence="1">
    <location>
        <position position="372"/>
    </location>
    <ligand>
        <name>Mo-bis(molybdopterin guanine dinucleotide)</name>
        <dbReference type="ChEBI" id="CHEBI:60539"/>
    </ligand>
</feature>
<feature type="binding site" evidence="1">
    <location>
        <position position="376"/>
    </location>
    <ligand>
        <name>Mo-bis(molybdopterin guanine dinucleotide)</name>
        <dbReference type="ChEBI" id="CHEBI:60539"/>
    </ligand>
</feature>
<feature type="binding site" evidence="1">
    <location>
        <position position="482"/>
    </location>
    <ligand>
        <name>Mo-bis(molybdopterin guanine dinucleotide)</name>
        <dbReference type="ChEBI" id="CHEBI:60539"/>
    </ligand>
</feature>
<feature type="binding site" evidence="1">
    <location>
        <begin position="508"/>
        <end position="509"/>
    </location>
    <ligand>
        <name>Mo-bis(molybdopterin guanine dinucleotide)</name>
        <dbReference type="ChEBI" id="CHEBI:60539"/>
    </ligand>
</feature>
<feature type="binding site" evidence="1">
    <location>
        <position position="531"/>
    </location>
    <ligand>
        <name>Mo-bis(molybdopterin guanine dinucleotide)</name>
        <dbReference type="ChEBI" id="CHEBI:60539"/>
    </ligand>
</feature>
<feature type="binding site" evidence="1">
    <location>
        <position position="558"/>
    </location>
    <ligand>
        <name>Mo-bis(molybdopterin guanine dinucleotide)</name>
        <dbReference type="ChEBI" id="CHEBI:60539"/>
    </ligand>
</feature>
<feature type="binding site" evidence="1">
    <location>
        <begin position="718"/>
        <end position="727"/>
    </location>
    <ligand>
        <name>Mo-bis(molybdopterin guanine dinucleotide)</name>
        <dbReference type="ChEBI" id="CHEBI:60539"/>
    </ligand>
</feature>
<feature type="binding site" evidence="1">
    <location>
        <position position="794"/>
    </location>
    <ligand>
        <name>substrate</name>
    </ligand>
</feature>
<feature type="binding site" evidence="1">
    <location>
        <position position="802"/>
    </location>
    <ligand>
        <name>Mo-bis(molybdopterin guanine dinucleotide)</name>
        <dbReference type="ChEBI" id="CHEBI:60539"/>
    </ligand>
</feature>
<feature type="binding site" evidence="1">
    <location>
        <position position="819"/>
    </location>
    <ligand>
        <name>Mo-bis(molybdopterin guanine dinucleotide)</name>
        <dbReference type="ChEBI" id="CHEBI:60539"/>
    </ligand>
</feature>
<dbReference type="EC" id="1.9.6.1" evidence="1"/>
<dbReference type="EMBL" id="CU928163">
    <property type="protein sequence ID" value="CAR13726.1"/>
    <property type="molecule type" value="Genomic_DNA"/>
</dbReference>
<dbReference type="RefSeq" id="WP_000778067.1">
    <property type="nucleotide sequence ID" value="NC_011751.1"/>
</dbReference>
<dbReference type="RefSeq" id="YP_002413254.1">
    <property type="nucleotide sequence ID" value="NC_011751.1"/>
</dbReference>
<dbReference type="SMR" id="B7N5G7"/>
<dbReference type="STRING" id="585056.ECUMN_2541"/>
<dbReference type="GeneID" id="93774972"/>
<dbReference type="KEGG" id="eum:ECUMN_2541"/>
<dbReference type="PATRIC" id="fig|585056.7.peg.2724"/>
<dbReference type="HOGENOM" id="CLU_000422_13_4_6"/>
<dbReference type="Proteomes" id="UP000007097">
    <property type="component" value="Chromosome"/>
</dbReference>
<dbReference type="GO" id="GO:0016020">
    <property type="term" value="C:membrane"/>
    <property type="evidence" value="ECO:0007669"/>
    <property type="project" value="TreeGrafter"/>
</dbReference>
<dbReference type="GO" id="GO:0009325">
    <property type="term" value="C:nitrate reductase complex"/>
    <property type="evidence" value="ECO:0007669"/>
    <property type="project" value="TreeGrafter"/>
</dbReference>
<dbReference type="GO" id="GO:0042597">
    <property type="term" value="C:periplasmic space"/>
    <property type="evidence" value="ECO:0007669"/>
    <property type="project" value="UniProtKB-SubCell"/>
</dbReference>
<dbReference type="GO" id="GO:0051539">
    <property type="term" value="F:4 iron, 4 sulfur cluster binding"/>
    <property type="evidence" value="ECO:0007669"/>
    <property type="project" value="UniProtKB-KW"/>
</dbReference>
<dbReference type="GO" id="GO:0009055">
    <property type="term" value="F:electron transfer activity"/>
    <property type="evidence" value="ECO:0007669"/>
    <property type="project" value="UniProtKB-UniRule"/>
</dbReference>
<dbReference type="GO" id="GO:0005506">
    <property type="term" value="F:iron ion binding"/>
    <property type="evidence" value="ECO:0007669"/>
    <property type="project" value="UniProtKB-UniRule"/>
</dbReference>
<dbReference type="GO" id="GO:0030151">
    <property type="term" value="F:molybdenum ion binding"/>
    <property type="evidence" value="ECO:0007669"/>
    <property type="project" value="InterPro"/>
</dbReference>
<dbReference type="GO" id="GO:0043546">
    <property type="term" value="F:molybdopterin cofactor binding"/>
    <property type="evidence" value="ECO:0007669"/>
    <property type="project" value="InterPro"/>
</dbReference>
<dbReference type="GO" id="GO:0050140">
    <property type="term" value="F:nitrate reductase (cytochrome) activity"/>
    <property type="evidence" value="ECO:0007669"/>
    <property type="project" value="UniProtKB-EC"/>
</dbReference>
<dbReference type="GO" id="GO:0045333">
    <property type="term" value="P:cellular respiration"/>
    <property type="evidence" value="ECO:0007669"/>
    <property type="project" value="UniProtKB-ARBA"/>
</dbReference>
<dbReference type="GO" id="GO:0006777">
    <property type="term" value="P:Mo-molybdopterin cofactor biosynthetic process"/>
    <property type="evidence" value="ECO:0007669"/>
    <property type="project" value="UniProtKB-UniRule"/>
</dbReference>
<dbReference type="GO" id="GO:0042128">
    <property type="term" value="P:nitrate assimilation"/>
    <property type="evidence" value="ECO:0007669"/>
    <property type="project" value="UniProtKB-UniRule"/>
</dbReference>
<dbReference type="CDD" id="cd02791">
    <property type="entry name" value="MopB_CT_Nitrate-R-NapA-like"/>
    <property type="match status" value="1"/>
</dbReference>
<dbReference type="CDD" id="cd02754">
    <property type="entry name" value="MopB_Nitrate-R-NapA-like"/>
    <property type="match status" value="1"/>
</dbReference>
<dbReference type="FunFam" id="2.40.40.20:FF:000005">
    <property type="entry name" value="Periplasmic nitrate reductase"/>
    <property type="match status" value="1"/>
</dbReference>
<dbReference type="FunFam" id="3.40.228.10:FF:000001">
    <property type="entry name" value="Periplasmic nitrate reductase"/>
    <property type="match status" value="1"/>
</dbReference>
<dbReference type="Gene3D" id="2.40.40.20">
    <property type="match status" value="1"/>
</dbReference>
<dbReference type="Gene3D" id="3.30.200.210">
    <property type="match status" value="1"/>
</dbReference>
<dbReference type="Gene3D" id="3.40.50.740">
    <property type="match status" value="1"/>
</dbReference>
<dbReference type="Gene3D" id="3.40.228.10">
    <property type="entry name" value="Dimethylsulfoxide Reductase, domain 2"/>
    <property type="match status" value="1"/>
</dbReference>
<dbReference type="HAMAP" id="MF_01630">
    <property type="entry name" value="Nitrate_reduct_NapA"/>
    <property type="match status" value="1"/>
</dbReference>
<dbReference type="InterPro" id="IPR009010">
    <property type="entry name" value="Asp_de-COase-like_dom_sf"/>
</dbReference>
<dbReference type="InterPro" id="IPR041957">
    <property type="entry name" value="CT_Nitrate-R-NapA-like"/>
</dbReference>
<dbReference type="InterPro" id="IPR006657">
    <property type="entry name" value="MoPterin_dinucl-bd_dom"/>
</dbReference>
<dbReference type="InterPro" id="IPR006656">
    <property type="entry name" value="Mopterin_OxRdtase"/>
</dbReference>
<dbReference type="InterPro" id="IPR006963">
    <property type="entry name" value="Mopterin_OxRdtase_4Fe-4S_dom"/>
</dbReference>
<dbReference type="InterPro" id="IPR027467">
    <property type="entry name" value="MopterinOxRdtase_cofactor_BS"/>
</dbReference>
<dbReference type="InterPro" id="IPR010051">
    <property type="entry name" value="Periplasm_NO3_reductase_lsu"/>
</dbReference>
<dbReference type="InterPro" id="IPR050123">
    <property type="entry name" value="Prok_molybdopt-oxidoreductase"/>
</dbReference>
<dbReference type="InterPro" id="IPR006311">
    <property type="entry name" value="TAT_signal"/>
</dbReference>
<dbReference type="InterPro" id="IPR019546">
    <property type="entry name" value="TAT_signal_bac_arc"/>
</dbReference>
<dbReference type="NCBIfam" id="TIGR01706">
    <property type="entry name" value="NAPA"/>
    <property type="match status" value="1"/>
</dbReference>
<dbReference type="NCBIfam" id="NF010055">
    <property type="entry name" value="PRK13532.1"/>
    <property type="match status" value="1"/>
</dbReference>
<dbReference type="NCBIfam" id="TIGR01409">
    <property type="entry name" value="TAT_signal_seq"/>
    <property type="match status" value="1"/>
</dbReference>
<dbReference type="PANTHER" id="PTHR43105:SF11">
    <property type="entry name" value="PERIPLASMIC NITRATE REDUCTASE"/>
    <property type="match status" value="1"/>
</dbReference>
<dbReference type="PANTHER" id="PTHR43105">
    <property type="entry name" value="RESPIRATORY NITRATE REDUCTASE"/>
    <property type="match status" value="1"/>
</dbReference>
<dbReference type="Pfam" id="PF04879">
    <property type="entry name" value="Molybdop_Fe4S4"/>
    <property type="match status" value="1"/>
</dbReference>
<dbReference type="Pfam" id="PF00384">
    <property type="entry name" value="Molybdopterin"/>
    <property type="match status" value="1"/>
</dbReference>
<dbReference type="Pfam" id="PF01568">
    <property type="entry name" value="Molydop_binding"/>
    <property type="match status" value="1"/>
</dbReference>
<dbReference type="SMART" id="SM00926">
    <property type="entry name" value="Molybdop_Fe4S4"/>
    <property type="match status" value="1"/>
</dbReference>
<dbReference type="SUPFAM" id="SSF50692">
    <property type="entry name" value="ADC-like"/>
    <property type="match status" value="1"/>
</dbReference>
<dbReference type="SUPFAM" id="SSF53706">
    <property type="entry name" value="Formate dehydrogenase/DMSO reductase, domains 1-3"/>
    <property type="match status" value="1"/>
</dbReference>
<dbReference type="PROSITE" id="PS51669">
    <property type="entry name" value="4FE4S_MOW_BIS_MGD"/>
    <property type="match status" value="1"/>
</dbReference>
<dbReference type="PROSITE" id="PS00551">
    <property type="entry name" value="MOLYBDOPTERIN_PROK_1"/>
    <property type="match status" value="1"/>
</dbReference>
<dbReference type="PROSITE" id="PS51318">
    <property type="entry name" value="TAT"/>
    <property type="match status" value="1"/>
</dbReference>
<keyword id="KW-0004">4Fe-4S</keyword>
<keyword id="KW-0249">Electron transport</keyword>
<keyword id="KW-0408">Iron</keyword>
<keyword id="KW-0411">Iron-sulfur</keyword>
<keyword id="KW-0479">Metal-binding</keyword>
<keyword id="KW-0500">Molybdenum</keyword>
<keyword id="KW-0534">Nitrate assimilation</keyword>
<keyword id="KW-0560">Oxidoreductase</keyword>
<keyword id="KW-0574">Periplasm</keyword>
<keyword id="KW-0732">Signal</keyword>
<keyword id="KW-0813">Transport</keyword>
<comment type="function">
    <text evidence="1">Catalytic subunit of the periplasmic nitrate reductase complex NapAB. Receives electrons from NapB and catalyzes the reduction of nitrate to nitrite.</text>
</comment>
<comment type="catalytic activity">
    <reaction evidence="1">
        <text>2 Fe(II)-[cytochrome] + nitrate + 2 H(+) = 2 Fe(III)-[cytochrome] + nitrite + H2O</text>
        <dbReference type="Rhea" id="RHEA:12909"/>
        <dbReference type="Rhea" id="RHEA-COMP:11777"/>
        <dbReference type="Rhea" id="RHEA-COMP:11778"/>
        <dbReference type="ChEBI" id="CHEBI:15377"/>
        <dbReference type="ChEBI" id="CHEBI:15378"/>
        <dbReference type="ChEBI" id="CHEBI:16301"/>
        <dbReference type="ChEBI" id="CHEBI:17632"/>
        <dbReference type="ChEBI" id="CHEBI:29033"/>
        <dbReference type="ChEBI" id="CHEBI:29034"/>
        <dbReference type="EC" id="1.9.6.1"/>
    </reaction>
</comment>
<comment type="cofactor">
    <cofactor evidence="1">
        <name>[4Fe-4S] cluster</name>
        <dbReference type="ChEBI" id="CHEBI:49883"/>
    </cofactor>
    <text evidence="1">Binds 1 [4Fe-4S] cluster.</text>
</comment>
<comment type="cofactor">
    <cofactor evidence="1">
        <name>Mo-bis(molybdopterin guanine dinucleotide)</name>
        <dbReference type="ChEBI" id="CHEBI:60539"/>
    </cofactor>
    <text evidence="1">Binds 1 molybdenum-bis(molybdopterin guanine dinucleotide) (Mo-bis-MGD) cofactor per subunit.</text>
</comment>
<comment type="subunit">
    <text evidence="1">Component of the periplasmic nitrate reductase NapAB complex composed of NapA and NapB.</text>
</comment>
<comment type="subcellular location">
    <subcellularLocation>
        <location evidence="1">Periplasm</location>
    </subcellularLocation>
</comment>
<comment type="PTM">
    <text evidence="1">Predicted to be exported by the Tat system. The position of the signal peptide cleavage has not been experimentally proven.</text>
</comment>
<comment type="similarity">
    <text evidence="1">Belongs to the prokaryotic molybdopterin-containing oxidoreductase family. NasA/NapA/NarB subfamily.</text>
</comment>
<gene>
    <name evidence="1" type="primary">napA</name>
    <name type="ordered locus">ECUMN_2541</name>
</gene>